<accession>P81102</accession>
<accession>Q9R9J6</accession>
<organism>
    <name type="scientific">Bacillus subtilis (strain 168)</name>
    <dbReference type="NCBI Taxonomy" id="224308"/>
    <lineage>
        <taxon>Bacteria</taxon>
        <taxon>Bacillati</taxon>
        <taxon>Bacillota</taxon>
        <taxon>Bacilli</taxon>
        <taxon>Bacillales</taxon>
        <taxon>Bacillaceae</taxon>
        <taxon>Bacillus</taxon>
    </lineage>
</organism>
<proteinExistence type="evidence at protein level"/>
<feature type="initiator methionine" description="Removed" evidence="3">
    <location>
        <position position="1"/>
    </location>
</feature>
<feature type="chain" id="PRO_0000072716" description="Putative NAD(P)H nitroreductase YodC">
    <location>
        <begin position="2"/>
        <end position="202"/>
    </location>
</feature>
<feature type="binding site" evidence="1">
    <location>
        <begin position="11"/>
        <end position="13"/>
    </location>
    <ligand>
        <name>FMN</name>
        <dbReference type="ChEBI" id="CHEBI:58210"/>
    </ligand>
</feature>
<feature type="binding site" evidence="1">
    <location>
        <begin position="68"/>
        <end position="70"/>
    </location>
    <ligand>
        <name>FMN</name>
        <dbReference type="ChEBI" id="CHEBI:58210"/>
    </ligand>
</feature>
<feature type="binding site" evidence="1">
    <location>
        <begin position="155"/>
        <end position="156"/>
    </location>
    <ligand>
        <name>FMN</name>
        <dbReference type="ChEBI" id="CHEBI:58210"/>
    </ligand>
</feature>
<feature type="binding site" evidence="1">
    <location>
        <position position="192"/>
    </location>
    <ligand>
        <name>FMN</name>
        <dbReference type="ChEBI" id="CHEBI:58210"/>
    </ligand>
</feature>
<feature type="sequence conflict" description="In Ref. 1; AAB81173." evidence="4" ref="1">
    <original>QL</original>
    <variation>HV</variation>
    <location>
        <begin position="139"/>
        <end position="140"/>
    </location>
</feature>
<sequence length="202" mass="22340">MTNTLDVLKARASVKEYDTNAPISKEELTELLDLATKAPSAWNLQHWHFTVFHSDESKAELLPVAYNQKQIVESSAVVAILGDLKANENGEEVYAELASQGYITDEIKQTLLGQINGAYQSEQFARDSAFLNASLAAMQLMIAAKAKGYDTCAIGGFNKEQFQKQFDISERYVPVMLISIGKAVKPAHQSNRLPLSKVSTWL</sequence>
<keyword id="KW-0058">Aromatic hydrocarbons catabolism</keyword>
<keyword id="KW-0963">Cytoplasm</keyword>
<keyword id="KW-0216">Detoxification</keyword>
<keyword id="KW-0903">Direct protein sequencing</keyword>
<keyword id="KW-0285">Flavoprotein</keyword>
<keyword id="KW-0288">FMN</keyword>
<keyword id="KW-0520">NAD</keyword>
<keyword id="KW-0521">NADP</keyword>
<keyword id="KW-0560">Oxidoreductase</keyword>
<keyword id="KW-1185">Reference proteome</keyword>
<protein>
    <recommendedName>
        <fullName>Putative NAD(P)H nitroreductase YodC</fullName>
        <ecNumber>1.-.-.-</ecNumber>
    </recommendedName>
</protein>
<evidence type="ECO:0000250" key="1"/>
<evidence type="ECO:0000269" key="2">
    <source>
    </source>
</evidence>
<evidence type="ECO:0000269" key="3">
    <source ref="4"/>
</evidence>
<evidence type="ECO:0000305" key="4"/>
<gene>
    <name type="primary">yodC</name>
    <name type="synonym">yolG</name>
    <name type="ordered locus">BSU19550</name>
</gene>
<reference key="1">
    <citation type="submission" date="1997-06" db="EMBL/GenBank/DDBJ databases">
        <title>Sequence analysis of the 30 kb region (182') of the Bacillus subtilis chromosome containing the cge cluster.</title>
        <authorList>
            <person name="Ghim S.-Y."/>
            <person name="Jeong Y.-M."/>
            <person name="Choi S.-K."/>
            <person name="Park S.-H."/>
        </authorList>
    </citation>
    <scope>NUCLEOTIDE SEQUENCE [GENOMIC DNA]</scope>
    <source>
        <strain>168</strain>
    </source>
</reference>
<reference key="2">
    <citation type="journal article" date="1998" name="DNA Res.">
        <title>Sequence analysis of the Bacillus subtilis 168 chromosome region between the sspC and odhA loci (184 degrees-180 degrees).</title>
        <authorList>
            <person name="Ghim S.-Y."/>
            <person name="Choi S.-K."/>
            <person name="Shin B.-S."/>
            <person name="Jeong Y.-M."/>
            <person name="Sorokin A."/>
            <person name="Ehrlich S.D."/>
            <person name="Park S.-H."/>
        </authorList>
    </citation>
    <scope>NUCLEOTIDE SEQUENCE [GENOMIC DNA]</scope>
    <source>
        <strain>168</strain>
    </source>
</reference>
<reference key="3">
    <citation type="journal article" date="1997" name="Nature">
        <title>The complete genome sequence of the Gram-positive bacterium Bacillus subtilis.</title>
        <authorList>
            <person name="Kunst F."/>
            <person name="Ogasawara N."/>
            <person name="Moszer I."/>
            <person name="Albertini A.M."/>
            <person name="Alloni G."/>
            <person name="Azevedo V."/>
            <person name="Bertero M.G."/>
            <person name="Bessieres P."/>
            <person name="Bolotin A."/>
            <person name="Borchert S."/>
            <person name="Borriss R."/>
            <person name="Boursier L."/>
            <person name="Brans A."/>
            <person name="Braun M."/>
            <person name="Brignell S.C."/>
            <person name="Bron S."/>
            <person name="Brouillet S."/>
            <person name="Bruschi C.V."/>
            <person name="Caldwell B."/>
            <person name="Capuano V."/>
            <person name="Carter N.M."/>
            <person name="Choi S.-K."/>
            <person name="Codani J.-J."/>
            <person name="Connerton I.F."/>
            <person name="Cummings N.J."/>
            <person name="Daniel R.A."/>
            <person name="Denizot F."/>
            <person name="Devine K.M."/>
            <person name="Duesterhoeft A."/>
            <person name="Ehrlich S.D."/>
            <person name="Emmerson P.T."/>
            <person name="Entian K.-D."/>
            <person name="Errington J."/>
            <person name="Fabret C."/>
            <person name="Ferrari E."/>
            <person name="Foulger D."/>
            <person name="Fritz C."/>
            <person name="Fujita M."/>
            <person name="Fujita Y."/>
            <person name="Fuma S."/>
            <person name="Galizzi A."/>
            <person name="Galleron N."/>
            <person name="Ghim S.-Y."/>
            <person name="Glaser P."/>
            <person name="Goffeau A."/>
            <person name="Golightly E.J."/>
            <person name="Grandi G."/>
            <person name="Guiseppi G."/>
            <person name="Guy B.J."/>
            <person name="Haga K."/>
            <person name="Haiech J."/>
            <person name="Harwood C.R."/>
            <person name="Henaut A."/>
            <person name="Hilbert H."/>
            <person name="Holsappel S."/>
            <person name="Hosono S."/>
            <person name="Hullo M.-F."/>
            <person name="Itaya M."/>
            <person name="Jones L.-M."/>
            <person name="Joris B."/>
            <person name="Karamata D."/>
            <person name="Kasahara Y."/>
            <person name="Klaerr-Blanchard M."/>
            <person name="Klein C."/>
            <person name="Kobayashi Y."/>
            <person name="Koetter P."/>
            <person name="Koningstein G."/>
            <person name="Krogh S."/>
            <person name="Kumano M."/>
            <person name="Kurita K."/>
            <person name="Lapidus A."/>
            <person name="Lardinois S."/>
            <person name="Lauber J."/>
            <person name="Lazarevic V."/>
            <person name="Lee S.-M."/>
            <person name="Levine A."/>
            <person name="Liu H."/>
            <person name="Masuda S."/>
            <person name="Mauel C."/>
            <person name="Medigue C."/>
            <person name="Medina N."/>
            <person name="Mellado R.P."/>
            <person name="Mizuno M."/>
            <person name="Moestl D."/>
            <person name="Nakai S."/>
            <person name="Noback M."/>
            <person name="Noone D."/>
            <person name="O'Reilly M."/>
            <person name="Ogawa K."/>
            <person name="Ogiwara A."/>
            <person name="Oudega B."/>
            <person name="Park S.-H."/>
            <person name="Parro V."/>
            <person name="Pohl T.M."/>
            <person name="Portetelle D."/>
            <person name="Porwollik S."/>
            <person name="Prescott A.M."/>
            <person name="Presecan E."/>
            <person name="Pujic P."/>
            <person name="Purnelle B."/>
            <person name="Rapoport G."/>
            <person name="Rey M."/>
            <person name="Reynolds S."/>
            <person name="Rieger M."/>
            <person name="Rivolta C."/>
            <person name="Rocha E."/>
            <person name="Roche B."/>
            <person name="Rose M."/>
            <person name="Sadaie Y."/>
            <person name="Sato T."/>
            <person name="Scanlan E."/>
            <person name="Schleich S."/>
            <person name="Schroeter R."/>
            <person name="Scoffone F."/>
            <person name="Sekiguchi J."/>
            <person name="Sekowska A."/>
            <person name="Seror S.J."/>
            <person name="Serror P."/>
            <person name="Shin B.-S."/>
            <person name="Soldo B."/>
            <person name="Sorokin A."/>
            <person name="Tacconi E."/>
            <person name="Takagi T."/>
            <person name="Takahashi H."/>
            <person name="Takemaru K."/>
            <person name="Takeuchi M."/>
            <person name="Tamakoshi A."/>
            <person name="Tanaka T."/>
            <person name="Terpstra P."/>
            <person name="Tognoni A."/>
            <person name="Tosato V."/>
            <person name="Uchiyama S."/>
            <person name="Vandenbol M."/>
            <person name="Vannier F."/>
            <person name="Vassarotti A."/>
            <person name="Viari A."/>
            <person name="Wambutt R."/>
            <person name="Wedler E."/>
            <person name="Wedler H."/>
            <person name="Weitzenegger T."/>
            <person name="Winters P."/>
            <person name="Wipat A."/>
            <person name="Yamamoto H."/>
            <person name="Yamane K."/>
            <person name="Yasumoto K."/>
            <person name="Yata K."/>
            <person name="Yoshida K."/>
            <person name="Yoshikawa H.-F."/>
            <person name="Zumstein E."/>
            <person name="Yoshikawa H."/>
            <person name="Danchin A."/>
        </authorList>
    </citation>
    <scope>NUCLEOTIDE SEQUENCE [LARGE SCALE GENOMIC DNA]</scope>
    <source>
        <strain>168</strain>
    </source>
</reference>
<reference key="4">
    <citation type="submission" date="1997-10" db="UniProtKB">
        <authorList>
            <person name="Graumann P.L."/>
            <person name="Schmid R."/>
            <person name="Marahiel M.A."/>
        </authorList>
    </citation>
    <scope>PROTEIN SEQUENCE OF 2-24</scope>
    <source>
        <strain>168 / JH642</strain>
    </source>
</reference>
<reference key="5">
    <citation type="journal article" date="2007" name="Proteomics">
        <title>Transcriptome and proteome analyses in response to 2-methylhydroquinone and 6-brom-2-vinyl-chroman-4-on reveal different degradation systems involved in the catabolism of aromatic compounds in Bacillus subtilis.</title>
        <authorList>
            <person name="Nguyen V.D."/>
            <person name="Wolf C."/>
            <person name="Maeder U."/>
            <person name="Lalk M."/>
            <person name="Langer P."/>
            <person name="Lindequist U."/>
            <person name="Hecker M."/>
            <person name="Antelmann H."/>
        </authorList>
    </citation>
    <scope>FUNCTION</scope>
    <scope>SUBCELLULAR LOCATION</scope>
    <scope>INDUCTION</scope>
    <source>
        <strain>168</strain>
    </source>
</reference>
<comment type="function">
    <text evidence="4">Putative nitroreductase that may contribute to the degradation of aromatic compounds.</text>
</comment>
<comment type="cofactor">
    <cofactor evidence="1">
        <name>FMN</name>
        <dbReference type="ChEBI" id="CHEBI:58210"/>
    </cofactor>
</comment>
<comment type="subcellular location">
    <subcellularLocation>
        <location evidence="2">Cytoplasm</location>
    </subcellularLocation>
</comment>
<comment type="induction">
    <text evidence="2">Repressed by YodB. Strongly induced by stress due to exposure to catechol and less strongly induced after diamide or 2-methylhydroquinone (2-MHQ) stress. Not induced by oxidative stress due to hydrogen peroxide or methylglyoxal.</text>
</comment>
<comment type="similarity">
    <text evidence="4">Belongs to the nitroreductase family.</text>
</comment>
<name>YODC_BACSU</name>
<dbReference type="EC" id="1.-.-.-"/>
<dbReference type="EMBL" id="AF006665">
    <property type="protein sequence ID" value="AAB81173.1"/>
    <property type="molecule type" value="Genomic_DNA"/>
</dbReference>
<dbReference type="EMBL" id="AF015775">
    <property type="protein sequence ID" value="AAB72053.1"/>
    <property type="molecule type" value="Genomic_DNA"/>
</dbReference>
<dbReference type="EMBL" id="AL009126">
    <property type="protein sequence ID" value="CAB13846.1"/>
    <property type="molecule type" value="Genomic_DNA"/>
</dbReference>
<dbReference type="PIR" id="H69902">
    <property type="entry name" value="H69902"/>
</dbReference>
<dbReference type="RefSeq" id="WP_003231196.1">
    <property type="nucleotide sequence ID" value="NZ_OZ025638.1"/>
</dbReference>
<dbReference type="SMR" id="P81102"/>
<dbReference type="FunCoup" id="P81102">
    <property type="interactions" value="42"/>
</dbReference>
<dbReference type="STRING" id="224308.BSU19550"/>
<dbReference type="jPOST" id="P81102"/>
<dbReference type="PaxDb" id="224308-BSU19550"/>
<dbReference type="EnsemblBacteria" id="CAB13846">
    <property type="protein sequence ID" value="CAB13846"/>
    <property type="gene ID" value="BSU_19550"/>
</dbReference>
<dbReference type="GeneID" id="939506"/>
<dbReference type="KEGG" id="bsu:BSU19550"/>
<dbReference type="PATRIC" id="fig|224308.179.peg.2137"/>
<dbReference type="eggNOG" id="COG0778">
    <property type="taxonomic scope" value="Bacteria"/>
</dbReference>
<dbReference type="InParanoid" id="P81102"/>
<dbReference type="OrthoDB" id="9782629at2"/>
<dbReference type="PhylomeDB" id="P81102"/>
<dbReference type="BioCyc" id="BSUB:BSU19550-MONOMER"/>
<dbReference type="Proteomes" id="UP000001570">
    <property type="component" value="Chromosome"/>
</dbReference>
<dbReference type="GO" id="GO:0005737">
    <property type="term" value="C:cytoplasm"/>
    <property type="evidence" value="ECO:0007669"/>
    <property type="project" value="UniProtKB-SubCell"/>
</dbReference>
<dbReference type="GO" id="GO:0016491">
    <property type="term" value="F:oxidoreductase activity"/>
    <property type="evidence" value="ECO:0007669"/>
    <property type="project" value="UniProtKB-KW"/>
</dbReference>
<dbReference type="GO" id="GO:0009056">
    <property type="term" value="P:catabolic process"/>
    <property type="evidence" value="ECO:0007669"/>
    <property type="project" value="UniProtKB-KW"/>
</dbReference>
<dbReference type="GO" id="GO:0009636">
    <property type="term" value="P:response to toxic substance"/>
    <property type="evidence" value="ECO:0007669"/>
    <property type="project" value="UniProtKB-KW"/>
</dbReference>
<dbReference type="CDD" id="cd02137">
    <property type="entry name" value="MhqN-like"/>
    <property type="match status" value="1"/>
</dbReference>
<dbReference type="Gene3D" id="3.40.109.10">
    <property type="entry name" value="NADH Oxidase"/>
    <property type="match status" value="1"/>
</dbReference>
<dbReference type="InterPro" id="IPR029479">
    <property type="entry name" value="Nitroreductase"/>
</dbReference>
<dbReference type="InterPro" id="IPR000415">
    <property type="entry name" value="Nitroreductase-like"/>
</dbReference>
<dbReference type="PANTHER" id="PTHR43673">
    <property type="entry name" value="NAD(P)H NITROREDUCTASE YDGI-RELATED"/>
    <property type="match status" value="1"/>
</dbReference>
<dbReference type="PANTHER" id="PTHR43673:SF3">
    <property type="entry name" value="NAD(P)H NITROREDUCTASE YODC-RELATED"/>
    <property type="match status" value="1"/>
</dbReference>
<dbReference type="Pfam" id="PF00881">
    <property type="entry name" value="Nitroreductase"/>
    <property type="match status" value="1"/>
</dbReference>
<dbReference type="SUPFAM" id="SSF55469">
    <property type="entry name" value="FMN-dependent nitroreductase-like"/>
    <property type="match status" value="1"/>
</dbReference>